<protein>
    <recommendedName>
        <fullName>Flagellar biosynthesis protein FlhA</fullName>
    </recommendedName>
</protein>
<feature type="chain" id="PRO_0000190016" description="Flagellar biosynthesis protein FlhA">
    <location>
        <begin position="1"/>
        <end position="692"/>
    </location>
</feature>
<feature type="transmembrane region" description="Helical" evidence="1">
    <location>
        <begin position="24"/>
        <end position="44"/>
    </location>
</feature>
<feature type="transmembrane region" description="Helical" evidence="1">
    <location>
        <begin position="46"/>
        <end position="66"/>
    </location>
</feature>
<feature type="transmembrane region" description="Helical" evidence="1">
    <location>
        <begin position="71"/>
        <end position="91"/>
    </location>
</feature>
<feature type="transmembrane region" description="Helical" evidence="1">
    <location>
        <begin position="95"/>
        <end position="115"/>
    </location>
</feature>
<feature type="transmembrane region" description="Helical" evidence="1">
    <location>
        <begin position="121"/>
        <end position="141"/>
    </location>
</feature>
<feature type="transmembrane region" description="Helical" evidence="1">
    <location>
        <begin position="209"/>
        <end position="229"/>
    </location>
</feature>
<feature type="transmembrane region" description="Helical" evidence="1">
    <location>
        <begin position="247"/>
        <end position="267"/>
    </location>
</feature>
<feature type="transmembrane region" description="Helical" evidence="1">
    <location>
        <begin position="296"/>
        <end position="316"/>
    </location>
</feature>
<feature type="sequence conflict" description="In Ref. 1; AAC17835." evidence="3" ref="1">
    <original>R</original>
    <variation>S</variation>
    <location>
        <position position="328"/>
    </location>
</feature>
<gene>
    <name type="primary">flhA</name>
    <name type="ordered locus">b1879</name>
    <name type="ordered locus">JW1868</name>
</gene>
<keyword id="KW-1005">Bacterial flagellum biogenesis</keyword>
<keyword id="KW-1006">Bacterial flagellum protein export</keyword>
<keyword id="KW-0997">Cell inner membrane</keyword>
<keyword id="KW-1003">Cell membrane</keyword>
<keyword id="KW-0472">Membrane</keyword>
<keyword id="KW-0653">Protein transport</keyword>
<keyword id="KW-1185">Reference proteome</keyword>
<keyword id="KW-0812">Transmembrane</keyword>
<keyword id="KW-1133">Transmembrane helix</keyword>
<keyword id="KW-0813">Transport</keyword>
<organism>
    <name type="scientific">Escherichia coli (strain K12)</name>
    <dbReference type="NCBI Taxonomy" id="83333"/>
    <lineage>
        <taxon>Bacteria</taxon>
        <taxon>Pseudomonadati</taxon>
        <taxon>Pseudomonadota</taxon>
        <taxon>Gammaproteobacteria</taxon>
        <taxon>Enterobacterales</taxon>
        <taxon>Enterobacteriaceae</taxon>
        <taxon>Escherichia</taxon>
    </lineage>
</organism>
<dbReference type="EMBL" id="U88319">
    <property type="protein sequence ID" value="AAC17835.1"/>
    <property type="molecule type" value="Genomic_DNA"/>
</dbReference>
<dbReference type="EMBL" id="U00096">
    <property type="protein sequence ID" value="AAC74949.1"/>
    <property type="molecule type" value="Genomic_DNA"/>
</dbReference>
<dbReference type="EMBL" id="AP009048">
    <property type="protein sequence ID" value="BAA15688.2"/>
    <property type="molecule type" value="Genomic_DNA"/>
</dbReference>
<dbReference type="PIR" id="G64950">
    <property type="entry name" value="G64950"/>
</dbReference>
<dbReference type="RefSeq" id="NP_416393.1">
    <property type="nucleotide sequence ID" value="NC_000913.3"/>
</dbReference>
<dbReference type="RefSeq" id="WP_000066951.1">
    <property type="nucleotide sequence ID" value="NZ_LN832404.1"/>
</dbReference>
<dbReference type="SMR" id="P76298"/>
<dbReference type="BioGRID" id="4260377">
    <property type="interactions" value="27"/>
</dbReference>
<dbReference type="BioGRID" id="850747">
    <property type="interactions" value="2"/>
</dbReference>
<dbReference type="ComplexPortal" id="CPX-5885">
    <property type="entry name" value="Flagellar export complex"/>
</dbReference>
<dbReference type="FunCoup" id="P76298">
    <property type="interactions" value="104"/>
</dbReference>
<dbReference type="IntAct" id="P76298">
    <property type="interactions" value="1"/>
</dbReference>
<dbReference type="STRING" id="511145.b1879"/>
<dbReference type="TCDB" id="1.A.104.1.1">
    <property type="family name" value="the proposed flagellar biosynthesis na+ channel, flha (flha) family"/>
</dbReference>
<dbReference type="PaxDb" id="511145-b1879"/>
<dbReference type="EnsemblBacteria" id="AAC74949">
    <property type="protein sequence ID" value="AAC74949"/>
    <property type="gene ID" value="b1879"/>
</dbReference>
<dbReference type="GeneID" id="946390"/>
<dbReference type="KEGG" id="ecj:JW1868"/>
<dbReference type="KEGG" id="eco:b1879"/>
<dbReference type="KEGG" id="ecoc:C3026_10690"/>
<dbReference type="PATRIC" id="fig|511145.12.peg.1959"/>
<dbReference type="EchoBASE" id="EB4021"/>
<dbReference type="eggNOG" id="COG1298">
    <property type="taxonomic scope" value="Bacteria"/>
</dbReference>
<dbReference type="InParanoid" id="P76298"/>
<dbReference type="OMA" id="RIRDNMQ"/>
<dbReference type="OrthoDB" id="9759185at2"/>
<dbReference type="PhylomeDB" id="P76298"/>
<dbReference type="BioCyc" id="EcoCyc:G370-MONOMER"/>
<dbReference type="PRO" id="PR:P76298"/>
<dbReference type="Proteomes" id="UP000000625">
    <property type="component" value="Chromosome"/>
</dbReference>
<dbReference type="GO" id="GO:0009288">
    <property type="term" value="C:bacterial-type flagellum"/>
    <property type="evidence" value="ECO:0000303"/>
    <property type="project" value="ComplexPortal"/>
</dbReference>
<dbReference type="GO" id="GO:0120102">
    <property type="term" value="C:bacterial-type flagellum secretion apparatus"/>
    <property type="evidence" value="ECO:0000303"/>
    <property type="project" value="ComplexPortal"/>
</dbReference>
<dbReference type="GO" id="GO:0005886">
    <property type="term" value="C:plasma membrane"/>
    <property type="evidence" value="ECO:0000314"/>
    <property type="project" value="EcoCyc"/>
</dbReference>
<dbReference type="GO" id="GO:0030257">
    <property type="term" value="C:type III protein secretion system complex"/>
    <property type="evidence" value="ECO:0000303"/>
    <property type="project" value="ComplexPortal"/>
</dbReference>
<dbReference type="GO" id="GO:0044780">
    <property type="term" value="P:bacterial-type flagellum assembly"/>
    <property type="evidence" value="ECO:0000315"/>
    <property type="project" value="EcoCyc"/>
</dbReference>
<dbReference type="GO" id="GO:0071973">
    <property type="term" value="P:bacterial-type flagellum-dependent cell motility"/>
    <property type="evidence" value="ECO:0000303"/>
    <property type="project" value="ComplexPortal"/>
</dbReference>
<dbReference type="GO" id="GO:0006935">
    <property type="term" value="P:chemotaxis"/>
    <property type="evidence" value="ECO:0000303"/>
    <property type="project" value="ComplexPortal"/>
</dbReference>
<dbReference type="GO" id="GO:0030254">
    <property type="term" value="P:protein secretion by the type III secretion system"/>
    <property type="evidence" value="ECO:0000303"/>
    <property type="project" value="ComplexPortal"/>
</dbReference>
<dbReference type="FunFam" id="1.10.8.540:FF:000001">
    <property type="entry name" value="Flagellar biosynthesis protein FlhA"/>
    <property type="match status" value="1"/>
</dbReference>
<dbReference type="FunFam" id="3.40.30.60:FF:000001">
    <property type="entry name" value="Flagellar biosynthesis protein FlhA"/>
    <property type="match status" value="1"/>
</dbReference>
<dbReference type="FunFam" id="3.40.50.12790:FF:000001">
    <property type="entry name" value="Flagellar biosynthesis protein FlhA"/>
    <property type="match status" value="1"/>
</dbReference>
<dbReference type="Gene3D" id="3.40.30.60">
    <property type="entry name" value="FHIPEP family, domain 1"/>
    <property type="match status" value="1"/>
</dbReference>
<dbReference type="Gene3D" id="1.10.8.540">
    <property type="entry name" value="FHIPEP family, domain 3"/>
    <property type="match status" value="1"/>
</dbReference>
<dbReference type="Gene3D" id="3.40.50.12790">
    <property type="entry name" value="FHIPEP family, domain 4"/>
    <property type="match status" value="1"/>
</dbReference>
<dbReference type="InterPro" id="IPR042194">
    <property type="entry name" value="FHIPEP_1"/>
</dbReference>
<dbReference type="InterPro" id="IPR042193">
    <property type="entry name" value="FHIPEP_3"/>
</dbReference>
<dbReference type="InterPro" id="IPR042196">
    <property type="entry name" value="FHIPEP_4"/>
</dbReference>
<dbReference type="InterPro" id="IPR025505">
    <property type="entry name" value="FHIPEP_CS"/>
</dbReference>
<dbReference type="InterPro" id="IPR006301">
    <property type="entry name" value="FlhA"/>
</dbReference>
<dbReference type="InterPro" id="IPR001712">
    <property type="entry name" value="T3SS_FHIPEP"/>
</dbReference>
<dbReference type="NCBIfam" id="TIGR01398">
    <property type="entry name" value="FlhA"/>
    <property type="match status" value="1"/>
</dbReference>
<dbReference type="PANTHER" id="PTHR30161:SF1">
    <property type="entry name" value="FLAGELLAR BIOSYNTHESIS PROTEIN FLHA-RELATED"/>
    <property type="match status" value="1"/>
</dbReference>
<dbReference type="PANTHER" id="PTHR30161">
    <property type="entry name" value="FLAGELLAR EXPORT PROTEIN, MEMBRANE FLHA SUBUNIT-RELATED"/>
    <property type="match status" value="1"/>
</dbReference>
<dbReference type="Pfam" id="PF00771">
    <property type="entry name" value="FHIPEP"/>
    <property type="match status" value="1"/>
</dbReference>
<dbReference type="PIRSF" id="PIRSF005419">
    <property type="entry name" value="FlhA"/>
    <property type="match status" value="1"/>
</dbReference>
<dbReference type="PRINTS" id="PR00949">
    <property type="entry name" value="TYPE3IMAPROT"/>
</dbReference>
<dbReference type="PROSITE" id="PS00994">
    <property type="entry name" value="FHIPEP"/>
    <property type="match status" value="1"/>
</dbReference>
<evidence type="ECO:0000255" key="1"/>
<evidence type="ECO:0000269" key="2">
    <source>
    </source>
</evidence>
<evidence type="ECO:0000305" key="3"/>
<accession>P76298</accession>
<accession>O87956</accession>
<sequence length="692" mass="74843">MSNLAAMLRLPANLKSTQWQILAGPILILLILSMMVLPLPAFILDLLFTFNIALSIMVLLVAMFTQRTLEFAAFPTILLFTTLLRLALNVASTRIILMEGHTGAAAAGKVVEAFGHFLVGGNFAIGIVVFVILVIINFMVITKGAGRIAEVGARFVLDGMPGKQMAIDADLNAGLIGEDEAKKRRSEVTQEADFYGSMDGASKFVRGDAIAGILIMVINIVGGLLVGVLQHGMSMGHAAESYTLLTIGDGLVAQIPALVISTAAGVIVTRVSTDQDVGEQMVNQLFSNPSVMLLSAAVLGLLGLVPGMPNLVFLLFTAGLLGLAWWIRGREQKAPAEPKPVKMAENNTVVEATWNDVQLEDSLGMEVGYRLIPMVDFQQDGELLGRIRSIRKKFAQEMGFLPPVVHIRDNMDLQPARYRILMKGVEIGSGDAYPGRWLAINPGTAAGTLPGEATVDPAFGLNAIWIESALKEQAQIQGYTVVEASTVVATHLNHLISQHAAELFGRQEAQQLLDRVAQEMPKLTEDLVPGVVTLTTLHKVLQNLLDEKVPIRDMRTILETLAEHAPIQSDPHELTAVVRVALGRAITQQWFPGKDEVHVIGLDTPLERLLLQALQGGGGLEPGLADRLLAQTQEALSRQEMLGAPPVLLVNHALRPLLSRFLRRSLPQLVVLSNLELSDNRHIRMTATIGGK</sequence>
<comment type="function">
    <text>Required for formation of the rod structure of the flagellar apparatus. Together with FliI and FliH, may constitute the export apparatus of flagellin.</text>
</comment>
<comment type="subcellular location">
    <subcellularLocation>
        <location evidence="2">Cell inner membrane</location>
        <topology evidence="2">Multi-pass membrane protein</topology>
    </subcellularLocation>
</comment>
<comment type="similarity">
    <text evidence="3">Belongs to the FHIPEP (flagella/HR/invasion proteins export pore) family.</text>
</comment>
<proteinExistence type="inferred from homology"/>
<reference key="1">
    <citation type="submission" date="1997-02" db="EMBL/GenBank/DDBJ databases">
        <title>Genomic organization of flhB operon in E.coli.</title>
        <authorList>
            <person name="Cho M."/>
            <person name="Matsumura P."/>
        </authorList>
    </citation>
    <scope>NUCLEOTIDE SEQUENCE [GENOMIC DNA]</scope>
</reference>
<reference key="2">
    <citation type="journal article" date="1996" name="DNA Res.">
        <title>A 460-kb DNA sequence of the Escherichia coli K-12 genome corresponding to the 40.1-50.0 min region on the linkage map.</title>
        <authorList>
            <person name="Itoh T."/>
            <person name="Aiba H."/>
            <person name="Baba T."/>
            <person name="Fujita K."/>
            <person name="Hayashi K."/>
            <person name="Inada T."/>
            <person name="Isono K."/>
            <person name="Kasai H."/>
            <person name="Kimura S."/>
            <person name="Kitakawa M."/>
            <person name="Kitagawa M."/>
            <person name="Makino K."/>
            <person name="Miki T."/>
            <person name="Mizobuchi K."/>
            <person name="Mori H."/>
            <person name="Mori T."/>
            <person name="Motomura K."/>
            <person name="Nakade S."/>
            <person name="Nakamura Y."/>
            <person name="Nashimoto H."/>
            <person name="Nishio Y."/>
            <person name="Oshima T."/>
            <person name="Saito N."/>
            <person name="Sampei G."/>
            <person name="Seki Y."/>
            <person name="Sivasundaram S."/>
            <person name="Tagami H."/>
            <person name="Takeda J."/>
            <person name="Takemoto K."/>
            <person name="Wada C."/>
            <person name="Yamamoto Y."/>
            <person name="Horiuchi T."/>
        </authorList>
    </citation>
    <scope>NUCLEOTIDE SEQUENCE [LARGE SCALE GENOMIC DNA]</scope>
    <source>
        <strain>K12 / W3110 / ATCC 27325 / DSM 5911</strain>
    </source>
</reference>
<reference key="3">
    <citation type="journal article" date="1997" name="Science">
        <title>The complete genome sequence of Escherichia coli K-12.</title>
        <authorList>
            <person name="Blattner F.R."/>
            <person name="Plunkett G. III"/>
            <person name="Bloch C.A."/>
            <person name="Perna N.T."/>
            <person name="Burland V."/>
            <person name="Riley M."/>
            <person name="Collado-Vides J."/>
            <person name="Glasner J.D."/>
            <person name="Rode C.K."/>
            <person name="Mayhew G.F."/>
            <person name="Gregor J."/>
            <person name="Davis N.W."/>
            <person name="Kirkpatrick H.A."/>
            <person name="Goeden M.A."/>
            <person name="Rose D.J."/>
            <person name="Mau B."/>
            <person name="Shao Y."/>
        </authorList>
    </citation>
    <scope>NUCLEOTIDE SEQUENCE [LARGE SCALE GENOMIC DNA]</scope>
    <source>
        <strain>K12 / MG1655 / ATCC 47076</strain>
    </source>
</reference>
<reference key="4">
    <citation type="journal article" date="2006" name="Mol. Syst. Biol.">
        <title>Highly accurate genome sequences of Escherichia coli K-12 strains MG1655 and W3110.</title>
        <authorList>
            <person name="Hayashi K."/>
            <person name="Morooka N."/>
            <person name="Yamamoto Y."/>
            <person name="Fujita K."/>
            <person name="Isono K."/>
            <person name="Choi S."/>
            <person name="Ohtsubo E."/>
            <person name="Baba T."/>
            <person name="Wanner B.L."/>
            <person name="Mori H."/>
            <person name="Horiuchi T."/>
        </authorList>
    </citation>
    <scope>NUCLEOTIDE SEQUENCE [LARGE SCALE GENOMIC DNA]</scope>
    <source>
        <strain>K12 / W3110 / ATCC 27325 / DSM 5911</strain>
    </source>
</reference>
<reference key="5">
    <citation type="journal article" date="2005" name="Science">
        <title>Global topology analysis of the Escherichia coli inner membrane proteome.</title>
        <authorList>
            <person name="Daley D.O."/>
            <person name="Rapp M."/>
            <person name="Granseth E."/>
            <person name="Melen K."/>
            <person name="Drew D."/>
            <person name="von Heijne G."/>
        </authorList>
    </citation>
    <scope>SUBCELLULAR LOCATION</scope>
    <source>
        <strain>K12 / MG1655 / ATCC 47076</strain>
    </source>
</reference>
<name>FLHA_ECOLI</name>